<dbReference type="EC" id="3.1.1.-" evidence="6"/>
<dbReference type="EMBL" id="AL022580">
    <property type="protein sequence ID" value="CAA18628.1"/>
    <property type="status" value="ALT_SEQ"/>
    <property type="molecule type" value="Genomic_DNA"/>
</dbReference>
<dbReference type="EMBL" id="AL161550">
    <property type="protein sequence ID" value="CAB78943.1"/>
    <property type="status" value="ALT_SEQ"/>
    <property type="molecule type" value="Genomic_DNA"/>
</dbReference>
<dbReference type="EMBL" id="CP002687">
    <property type="protein sequence ID" value="AEE84177.1"/>
    <property type="molecule type" value="Genomic_DNA"/>
</dbReference>
<dbReference type="EMBL" id="AY054531">
    <property type="protein sequence ID" value="AAK96722.1"/>
    <property type="molecule type" value="mRNA"/>
</dbReference>
<dbReference type="EMBL" id="AY064626">
    <property type="protein sequence ID" value="AAL47339.1"/>
    <property type="molecule type" value="mRNA"/>
</dbReference>
<dbReference type="EMBL" id="AK222036">
    <property type="protein sequence ID" value="BAD94756.1"/>
    <property type="molecule type" value="mRNA"/>
</dbReference>
<dbReference type="EMBL" id="AK228936">
    <property type="protein sequence ID" value="BAF00825.1"/>
    <property type="molecule type" value="mRNA"/>
</dbReference>
<dbReference type="EMBL" id="AY087371">
    <property type="protein sequence ID" value="AAM64921.1"/>
    <property type="molecule type" value="mRNA"/>
</dbReference>
<dbReference type="PIR" id="T05824">
    <property type="entry name" value="T05824"/>
</dbReference>
<dbReference type="RefSeq" id="NP_567585.1">
    <molecule id="Q940J8-1"/>
    <property type="nucleotide sequence ID" value="NM_118061.3"/>
</dbReference>
<dbReference type="SMR" id="Q940J8"/>
<dbReference type="FunCoup" id="Q940J8">
    <property type="interactions" value="69"/>
</dbReference>
<dbReference type="IntAct" id="Q940J8">
    <property type="interactions" value="1"/>
</dbReference>
<dbReference type="STRING" id="3702.Q940J8"/>
<dbReference type="ESTHER" id="arath-f4jt64">
    <property type="family name" value="Pectinacetylesterase-Notum"/>
</dbReference>
<dbReference type="PaxDb" id="3702-AT4G19410.2"/>
<dbReference type="ProteomicsDB" id="248649">
    <molecule id="Q940J8-1"/>
</dbReference>
<dbReference type="EnsemblPlants" id="AT4G19410.1">
    <molecule id="Q940J8-1"/>
    <property type="protein sequence ID" value="AT4G19410.1"/>
    <property type="gene ID" value="AT4G19410"/>
</dbReference>
<dbReference type="GeneID" id="827682"/>
<dbReference type="Gramene" id="AT4G19410.1">
    <molecule id="Q940J8-1"/>
    <property type="protein sequence ID" value="AT4G19410.1"/>
    <property type="gene ID" value="AT4G19410"/>
</dbReference>
<dbReference type="KEGG" id="ath:AT4G19410"/>
<dbReference type="Araport" id="AT4G19410"/>
<dbReference type="TAIR" id="AT4G19410">
    <property type="gene designation" value="PAE7"/>
</dbReference>
<dbReference type="eggNOG" id="KOG4287">
    <property type="taxonomic scope" value="Eukaryota"/>
</dbReference>
<dbReference type="HOGENOM" id="CLU_031008_0_3_1"/>
<dbReference type="InParanoid" id="Q940J8"/>
<dbReference type="OMA" id="DCPSPTC"/>
<dbReference type="PhylomeDB" id="Q940J8"/>
<dbReference type="PRO" id="PR:Q940J8"/>
<dbReference type="Proteomes" id="UP000006548">
    <property type="component" value="Chromosome 4"/>
</dbReference>
<dbReference type="ExpressionAtlas" id="Q940J8">
    <property type="expression patterns" value="baseline and differential"/>
</dbReference>
<dbReference type="GO" id="GO:0005576">
    <property type="term" value="C:extracellular region"/>
    <property type="evidence" value="ECO:0007669"/>
    <property type="project" value="UniProtKB-KW"/>
</dbReference>
<dbReference type="GO" id="GO:0009505">
    <property type="term" value="C:plant-type cell wall"/>
    <property type="evidence" value="ECO:0007005"/>
    <property type="project" value="TAIR"/>
</dbReference>
<dbReference type="GO" id="GO:0009506">
    <property type="term" value="C:plasmodesma"/>
    <property type="evidence" value="ECO:0007005"/>
    <property type="project" value="TAIR"/>
</dbReference>
<dbReference type="GO" id="GO:0016787">
    <property type="term" value="F:hydrolase activity"/>
    <property type="evidence" value="ECO:0007669"/>
    <property type="project" value="UniProtKB-KW"/>
</dbReference>
<dbReference type="GO" id="GO:0071555">
    <property type="term" value="P:cell wall organization"/>
    <property type="evidence" value="ECO:0007669"/>
    <property type="project" value="UniProtKB-KW"/>
</dbReference>
<dbReference type="InterPro" id="IPR004963">
    <property type="entry name" value="PAE/NOTUM"/>
</dbReference>
<dbReference type="PANTHER" id="PTHR21562">
    <property type="entry name" value="NOTUM-RELATED"/>
    <property type="match status" value="1"/>
</dbReference>
<dbReference type="PANTHER" id="PTHR21562:SF121">
    <property type="entry name" value="PECTIN ACETYLESTERASE 7"/>
    <property type="match status" value="1"/>
</dbReference>
<dbReference type="Pfam" id="PF03283">
    <property type="entry name" value="PAE"/>
    <property type="match status" value="1"/>
</dbReference>
<reference key="1">
    <citation type="journal article" date="1999" name="Nature">
        <title>Sequence and analysis of chromosome 4 of the plant Arabidopsis thaliana.</title>
        <authorList>
            <person name="Mayer K.F.X."/>
            <person name="Schueller C."/>
            <person name="Wambutt R."/>
            <person name="Murphy G."/>
            <person name="Volckaert G."/>
            <person name="Pohl T."/>
            <person name="Duesterhoeft A."/>
            <person name="Stiekema W."/>
            <person name="Entian K.-D."/>
            <person name="Terryn N."/>
            <person name="Harris B."/>
            <person name="Ansorge W."/>
            <person name="Brandt P."/>
            <person name="Grivell L.A."/>
            <person name="Rieger M."/>
            <person name="Weichselgartner M."/>
            <person name="de Simone V."/>
            <person name="Obermaier B."/>
            <person name="Mache R."/>
            <person name="Mueller M."/>
            <person name="Kreis M."/>
            <person name="Delseny M."/>
            <person name="Puigdomenech P."/>
            <person name="Watson M."/>
            <person name="Schmidtheini T."/>
            <person name="Reichert B."/>
            <person name="Portetelle D."/>
            <person name="Perez-Alonso M."/>
            <person name="Boutry M."/>
            <person name="Bancroft I."/>
            <person name="Vos P."/>
            <person name="Hoheisel J."/>
            <person name="Zimmermann W."/>
            <person name="Wedler H."/>
            <person name="Ridley P."/>
            <person name="Langham S.-A."/>
            <person name="McCullagh B."/>
            <person name="Bilham L."/>
            <person name="Robben J."/>
            <person name="van der Schueren J."/>
            <person name="Grymonprez B."/>
            <person name="Chuang Y.-J."/>
            <person name="Vandenbussche F."/>
            <person name="Braeken M."/>
            <person name="Weltjens I."/>
            <person name="Voet M."/>
            <person name="Bastiaens I."/>
            <person name="Aert R."/>
            <person name="Defoor E."/>
            <person name="Weitzenegger T."/>
            <person name="Bothe G."/>
            <person name="Ramsperger U."/>
            <person name="Hilbert H."/>
            <person name="Braun M."/>
            <person name="Holzer E."/>
            <person name="Brandt A."/>
            <person name="Peters S."/>
            <person name="van Staveren M."/>
            <person name="Dirkse W."/>
            <person name="Mooijman P."/>
            <person name="Klein Lankhorst R."/>
            <person name="Rose M."/>
            <person name="Hauf J."/>
            <person name="Koetter P."/>
            <person name="Berneiser S."/>
            <person name="Hempel S."/>
            <person name="Feldpausch M."/>
            <person name="Lamberth S."/>
            <person name="Van den Daele H."/>
            <person name="De Keyser A."/>
            <person name="Buysshaert C."/>
            <person name="Gielen J."/>
            <person name="Villarroel R."/>
            <person name="De Clercq R."/>
            <person name="van Montagu M."/>
            <person name="Rogers J."/>
            <person name="Cronin A."/>
            <person name="Quail M.A."/>
            <person name="Bray-Allen S."/>
            <person name="Clark L."/>
            <person name="Doggett J."/>
            <person name="Hall S."/>
            <person name="Kay M."/>
            <person name="Lennard N."/>
            <person name="McLay K."/>
            <person name="Mayes R."/>
            <person name="Pettett A."/>
            <person name="Rajandream M.A."/>
            <person name="Lyne M."/>
            <person name="Benes V."/>
            <person name="Rechmann S."/>
            <person name="Borkova D."/>
            <person name="Bloecker H."/>
            <person name="Scharfe M."/>
            <person name="Grimm M."/>
            <person name="Loehnert T.-H."/>
            <person name="Dose S."/>
            <person name="de Haan M."/>
            <person name="Maarse A.C."/>
            <person name="Schaefer M."/>
            <person name="Mueller-Auer S."/>
            <person name="Gabel C."/>
            <person name="Fuchs M."/>
            <person name="Fartmann B."/>
            <person name="Granderath K."/>
            <person name="Dauner D."/>
            <person name="Herzl A."/>
            <person name="Neumann S."/>
            <person name="Argiriou A."/>
            <person name="Vitale D."/>
            <person name="Liguori R."/>
            <person name="Piravandi E."/>
            <person name="Massenet O."/>
            <person name="Quigley F."/>
            <person name="Clabauld G."/>
            <person name="Muendlein A."/>
            <person name="Felber R."/>
            <person name="Schnabl S."/>
            <person name="Hiller R."/>
            <person name="Schmidt W."/>
            <person name="Lecharny A."/>
            <person name="Aubourg S."/>
            <person name="Chefdor F."/>
            <person name="Cooke R."/>
            <person name="Berger C."/>
            <person name="Monfort A."/>
            <person name="Casacuberta E."/>
            <person name="Gibbons T."/>
            <person name="Weber N."/>
            <person name="Vandenbol M."/>
            <person name="Bargues M."/>
            <person name="Terol J."/>
            <person name="Torres A."/>
            <person name="Perez-Perez A."/>
            <person name="Purnelle B."/>
            <person name="Bent E."/>
            <person name="Johnson S."/>
            <person name="Tacon D."/>
            <person name="Jesse T."/>
            <person name="Heijnen L."/>
            <person name="Schwarz S."/>
            <person name="Scholler P."/>
            <person name="Heber S."/>
            <person name="Francs P."/>
            <person name="Bielke C."/>
            <person name="Frishman D."/>
            <person name="Haase D."/>
            <person name="Lemcke K."/>
            <person name="Mewes H.-W."/>
            <person name="Stocker S."/>
            <person name="Zaccaria P."/>
            <person name="Bevan M."/>
            <person name="Wilson R.K."/>
            <person name="de la Bastide M."/>
            <person name="Habermann K."/>
            <person name="Parnell L."/>
            <person name="Dedhia N."/>
            <person name="Gnoj L."/>
            <person name="Schutz K."/>
            <person name="Huang E."/>
            <person name="Spiegel L."/>
            <person name="Sekhon M."/>
            <person name="Murray J."/>
            <person name="Sheet P."/>
            <person name="Cordes M."/>
            <person name="Abu-Threideh J."/>
            <person name="Stoneking T."/>
            <person name="Kalicki J."/>
            <person name="Graves T."/>
            <person name="Harmon G."/>
            <person name="Edwards J."/>
            <person name="Latreille P."/>
            <person name="Courtney L."/>
            <person name="Cloud J."/>
            <person name="Abbott A."/>
            <person name="Scott K."/>
            <person name="Johnson D."/>
            <person name="Minx P."/>
            <person name="Bentley D."/>
            <person name="Fulton B."/>
            <person name="Miller N."/>
            <person name="Greco T."/>
            <person name="Kemp K."/>
            <person name="Kramer J."/>
            <person name="Fulton L."/>
            <person name="Mardis E."/>
            <person name="Dante M."/>
            <person name="Pepin K."/>
            <person name="Hillier L.W."/>
            <person name="Nelson J."/>
            <person name="Spieth J."/>
            <person name="Ryan E."/>
            <person name="Andrews S."/>
            <person name="Geisel C."/>
            <person name="Layman D."/>
            <person name="Du H."/>
            <person name="Ali J."/>
            <person name="Berghoff A."/>
            <person name="Jones K."/>
            <person name="Drone K."/>
            <person name="Cotton M."/>
            <person name="Joshu C."/>
            <person name="Antonoiu B."/>
            <person name="Zidanic M."/>
            <person name="Strong C."/>
            <person name="Sun H."/>
            <person name="Lamar B."/>
            <person name="Yordan C."/>
            <person name="Ma P."/>
            <person name="Zhong J."/>
            <person name="Preston R."/>
            <person name="Vil D."/>
            <person name="Shekher M."/>
            <person name="Matero A."/>
            <person name="Shah R."/>
            <person name="Swaby I.K."/>
            <person name="O'Shaughnessy A."/>
            <person name="Rodriguez M."/>
            <person name="Hoffman J."/>
            <person name="Till S."/>
            <person name="Granat S."/>
            <person name="Shohdy N."/>
            <person name="Hasegawa A."/>
            <person name="Hameed A."/>
            <person name="Lodhi M."/>
            <person name="Johnson A."/>
            <person name="Chen E."/>
            <person name="Marra M.A."/>
            <person name="Martienssen R."/>
            <person name="McCombie W.R."/>
        </authorList>
    </citation>
    <scope>NUCLEOTIDE SEQUENCE [LARGE SCALE GENOMIC DNA]</scope>
    <source>
        <strain>cv. Columbia</strain>
    </source>
</reference>
<reference key="2">
    <citation type="journal article" date="2017" name="Plant J.">
        <title>Araport11: a complete reannotation of the Arabidopsis thaliana reference genome.</title>
        <authorList>
            <person name="Cheng C.Y."/>
            <person name="Krishnakumar V."/>
            <person name="Chan A.P."/>
            <person name="Thibaud-Nissen F."/>
            <person name="Schobel S."/>
            <person name="Town C.D."/>
        </authorList>
    </citation>
    <scope>GENOME REANNOTATION</scope>
    <source>
        <strain>cv. Columbia</strain>
    </source>
</reference>
<reference key="3">
    <citation type="journal article" date="2003" name="Science">
        <title>Empirical analysis of transcriptional activity in the Arabidopsis genome.</title>
        <authorList>
            <person name="Yamada K."/>
            <person name="Lim J."/>
            <person name="Dale J.M."/>
            <person name="Chen H."/>
            <person name="Shinn P."/>
            <person name="Palm C.J."/>
            <person name="Southwick A.M."/>
            <person name="Wu H.C."/>
            <person name="Kim C.J."/>
            <person name="Nguyen M."/>
            <person name="Pham P.K."/>
            <person name="Cheuk R.F."/>
            <person name="Karlin-Newmann G."/>
            <person name="Liu S.X."/>
            <person name="Lam B."/>
            <person name="Sakano H."/>
            <person name="Wu T."/>
            <person name="Yu G."/>
            <person name="Miranda M."/>
            <person name="Quach H.L."/>
            <person name="Tripp M."/>
            <person name="Chang C.H."/>
            <person name="Lee J.M."/>
            <person name="Toriumi M.J."/>
            <person name="Chan M.M."/>
            <person name="Tang C.C."/>
            <person name="Onodera C.S."/>
            <person name="Deng J.M."/>
            <person name="Akiyama K."/>
            <person name="Ansari Y."/>
            <person name="Arakawa T."/>
            <person name="Banh J."/>
            <person name="Banno F."/>
            <person name="Bowser L."/>
            <person name="Brooks S.Y."/>
            <person name="Carninci P."/>
            <person name="Chao Q."/>
            <person name="Choy N."/>
            <person name="Enju A."/>
            <person name="Goldsmith A.D."/>
            <person name="Gurjal M."/>
            <person name="Hansen N.F."/>
            <person name="Hayashizaki Y."/>
            <person name="Johnson-Hopson C."/>
            <person name="Hsuan V.W."/>
            <person name="Iida K."/>
            <person name="Karnes M."/>
            <person name="Khan S."/>
            <person name="Koesema E."/>
            <person name="Ishida J."/>
            <person name="Jiang P.X."/>
            <person name="Jones T."/>
            <person name="Kawai J."/>
            <person name="Kamiya A."/>
            <person name="Meyers C."/>
            <person name="Nakajima M."/>
            <person name="Narusaka M."/>
            <person name="Seki M."/>
            <person name="Sakurai T."/>
            <person name="Satou M."/>
            <person name="Tamse R."/>
            <person name="Vaysberg M."/>
            <person name="Wallender E.K."/>
            <person name="Wong C."/>
            <person name="Yamamura Y."/>
            <person name="Yuan S."/>
            <person name="Shinozaki K."/>
            <person name="Davis R.W."/>
            <person name="Theologis A."/>
            <person name="Ecker J.R."/>
        </authorList>
    </citation>
    <scope>NUCLEOTIDE SEQUENCE [LARGE SCALE MRNA]</scope>
    <source>
        <strain>cv. Columbia</strain>
    </source>
</reference>
<reference key="4">
    <citation type="submission" date="2006-07" db="EMBL/GenBank/DDBJ databases">
        <title>Large-scale analysis of RIKEN Arabidopsis full-length (RAFL) cDNAs.</title>
        <authorList>
            <person name="Totoki Y."/>
            <person name="Seki M."/>
            <person name="Ishida J."/>
            <person name="Nakajima M."/>
            <person name="Enju A."/>
            <person name="Kamiya A."/>
            <person name="Narusaka M."/>
            <person name="Shin-i T."/>
            <person name="Nakagawa M."/>
            <person name="Sakamoto N."/>
            <person name="Oishi K."/>
            <person name="Kohara Y."/>
            <person name="Kobayashi M."/>
            <person name="Toyoda A."/>
            <person name="Sakaki Y."/>
            <person name="Sakurai T."/>
            <person name="Iida K."/>
            <person name="Akiyama K."/>
            <person name="Satou M."/>
            <person name="Toyoda T."/>
            <person name="Konagaya A."/>
            <person name="Carninci P."/>
            <person name="Kawai J."/>
            <person name="Hayashizaki Y."/>
            <person name="Shinozaki K."/>
        </authorList>
    </citation>
    <scope>NUCLEOTIDE SEQUENCE [LARGE SCALE MRNA]</scope>
    <source>
        <strain>cv. Columbia</strain>
    </source>
</reference>
<reference key="5">
    <citation type="submission" date="2002-03" db="EMBL/GenBank/DDBJ databases">
        <title>Full-length cDNA from Arabidopsis thaliana.</title>
        <authorList>
            <person name="Brover V.V."/>
            <person name="Troukhan M.E."/>
            <person name="Alexandrov N.A."/>
            <person name="Lu Y.-P."/>
            <person name="Flavell R.B."/>
            <person name="Feldmann K.A."/>
        </authorList>
    </citation>
    <scope>NUCLEOTIDE SEQUENCE [LARGE SCALE MRNA]</scope>
</reference>
<reference key="6">
    <citation type="journal article" date="2014" name="Planta">
        <title>Identification and functional characterization of the distinct plant pectin esterases PAE8 and PAE9 and their deletion mutants.</title>
        <authorList>
            <person name="de Souza A."/>
            <person name="Hull P.A."/>
            <person name="Gille S."/>
            <person name="Pauly M."/>
        </authorList>
    </citation>
    <scope>GENE FAMILY</scope>
    <scope>DISRUPTION PHENOTYPE</scope>
</reference>
<evidence type="ECO:0000250" key="1">
    <source>
        <dbReference type="UniProtKB" id="B9DFR3"/>
    </source>
</evidence>
<evidence type="ECO:0000250" key="2">
    <source>
        <dbReference type="UniProtKB" id="Q6P988"/>
    </source>
</evidence>
<evidence type="ECO:0000255" key="3"/>
<evidence type="ECO:0000269" key="4">
    <source>
    </source>
</evidence>
<evidence type="ECO:0000303" key="5">
    <source>
    </source>
</evidence>
<evidence type="ECO:0000305" key="6"/>
<evidence type="ECO:0000312" key="7">
    <source>
        <dbReference type="Araport" id="AT4G19410"/>
    </source>
</evidence>
<evidence type="ECO:0000312" key="8">
    <source>
        <dbReference type="EMBL" id="AAK96722.1"/>
    </source>
</evidence>
<organism>
    <name type="scientific">Arabidopsis thaliana</name>
    <name type="common">Mouse-ear cress</name>
    <dbReference type="NCBI Taxonomy" id="3702"/>
    <lineage>
        <taxon>Eukaryota</taxon>
        <taxon>Viridiplantae</taxon>
        <taxon>Streptophyta</taxon>
        <taxon>Embryophyta</taxon>
        <taxon>Tracheophyta</taxon>
        <taxon>Spermatophyta</taxon>
        <taxon>Magnoliopsida</taxon>
        <taxon>eudicotyledons</taxon>
        <taxon>Gunneridae</taxon>
        <taxon>Pentapetalae</taxon>
        <taxon>rosids</taxon>
        <taxon>malvids</taxon>
        <taxon>Brassicales</taxon>
        <taxon>Brassicaceae</taxon>
        <taxon>Camelineae</taxon>
        <taxon>Arabidopsis</taxon>
    </lineage>
</organism>
<comment type="function">
    <text evidence="1">Hydrolyzes acetyl esters in homogalacturonan regions of pectin. In type I primary cell wall, galacturonic acid residues of pectin can be acetylated at the O-2 and O-3 positions. Decreasing the degree of acetylation of pectin gels in vitro alters their physical properties.</text>
</comment>
<comment type="subcellular location">
    <subcellularLocation>
        <location evidence="6">Secreted</location>
        <location evidence="6">Cell wall</location>
    </subcellularLocation>
</comment>
<comment type="alternative products">
    <event type="alternative splicing"/>
    <isoform>
        <id>Q940J8-1</id>
        <name>1</name>
        <sequence type="displayed"/>
    </isoform>
    <text evidence="6">A number of isoforms are produced. According to EST sequences.</text>
</comment>
<comment type="disruption phenotype">
    <text evidence="4">No visible phenotype under normal growth conditions.</text>
</comment>
<comment type="similarity">
    <text evidence="6">Belongs to the pectinacetylesterase family.</text>
</comment>
<comment type="sequence caution" evidence="6">
    <conflict type="erroneous gene model prediction">
        <sequence resource="EMBL-CDS" id="CAA18628"/>
    </conflict>
</comment>
<comment type="sequence caution" evidence="6">
    <conflict type="erroneous gene model prediction">
        <sequence resource="EMBL-CDS" id="CAB78943"/>
    </conflict>
</comment>
<feature type="signal peptide" evidence="3">
    <location>
        <begin position="1"/>
        <end position="23"/>
    </location>
</feature>
<feature type="chain" id="PRO_0000431772" description="Pectin acetylesterase 7" evidence="3">
    <location>
        <begin position="24"/>
        <end position="391"/>
    </location>
</feature>
<feature type="active site" description="Charge relay system" evidence="2">
    <location>
        <position position="171"/>
    </location>
</feature>
<feature type="active site" description="Charge relay system" evidence="2">
    <location>
        <position position="267"/>
    </location>
</feature>
<feature type="active site" description="Charge relay system" evidence="2">
    <location>
        <position position="334"/>
    </location>
</feature>
<protein>
    <recommendedName>
        <fullName evidence="5">Pectin acetylesterase 7</fullName>
        <ecNumber evidence="6">3.1.1.-</ecNumber>
    </recommendedName>
</protein>
<keyword id="KW-0025">Alternative splicing</keyword>
<keyword id="KW-0134">Cell wall</keyword>
<keyword id="KW-0961">Cell wall biogenesis/degradation</keyword>
<keyword id="KW-0378">Hydrolase</keyword>
<keyword id="KW-1185">Reference proteome</keyword>
<keyword id="KW-0964">Secreted</keyword>
<keyword id="KW-0732">Signal</keyword>
<sequence length="391" mass="42125">MGRLKQCWSSLLVLAVLVIGTGAVPITYLQSAVAKGAVCLDGSAPAYHFDKGFGSGVNNWIVHMEGGGWCTDVASCNERKGTMKGSSKFMNKDFGFSGILGGKQSTNPDFYNWNRIKVRYCDGSSFTGNVEAVNPANKLFFRGARVWRAVVDDLMAKGMKNAQNAILSGCSAGALAAILHCDTFRAILPRTASVKCVSDAGYFIHGKDITGGSYIQSYYSKVVALHGSAKSLPVSCTSKMKPELCFFPQYVVPSMRTPLFVINAAFDSWQIKNVLAPTAVDKGKEWKNCKLDLKKCSAAQLKTVQGFRDQMMRALSPVHSTPSRGLFLDSCHAHCQGGSAASWSGDKGPQVANTRIAKAVGNWFYGRSAFQKIDCPSPTCNPTCPAISTED</sequence>
<proteinExistence type="evidence at transcript level"/>
<accession>Q940J8</accession>
<accession>O65712</accession>
<accession>Q56WK4</accession>
<gene>
    <name evidence="5" type="primary">PAE7</name>
    <name evidence="7" type="ordered locus">At4g19410</name>
    <name evidence="8" type="ORF">T5K18.190</name>
</gene>
<name>PAE7_ARATH</name>